<protein>
    <recommendedName>
        <fullName>Alpha-amylase/trypsin inhibitor CMb</fullName>
    </recommendedName>
    <alternativeName>
        <fullName>Chloroform/methanol-soluble protein CMb</fullName>
    </alternativeName>
</protein>
<keyword id="KW-0020">Allergen</keyword>
<keyword id="KW-0022">Alpha-amylase inhibitor</keyword>
<keyword id="KW-0903">Direct protein sequencing</keyword>
<keyword id="KW-1015">Disulfide bond</keyword>
<keyword id="KW-0325">Glycoprotein</keyword>
<keyword id="KW-0646">Protease inhibitor</keyword>
<keyword id="KW-0964">Secreted</keyword>
<keyword id="KW-0722">Serine protease inhibitor</keyword>
<keyword id="KW-0732">Signal</keyword>
<reference key="1">
    <citation type="journal article" date="1993" name="Plant Mol. Biol.">
        <title>Cloning of cDNA, expression, and chromosomal location of genes encoding the three types of subunits of the barley tetrameric inhibitor of insect alpha-amylase.</title>
        <authorList>
            <person name="Medina-Alcazar J."/>
            <person name="Hueros G."/>
            <person name="Carbonero P."/>
        </authorList>
    </citation>
    <scope>NUCLEOTIDE SEQUENCE [MRNA]</scope>
    <source>
        <strain>cv. Abyssinian</strain>
        <tissue>Endosperm</tissue>
    </source>
</reference>
<reference key="2">
    <citation type="journal article" date="1986" name="Biochim. Biophys. Acta">
        <title>New alpha-amylase and trypsin inhibitors among the CM-proteins of barley (Hordeum vulgare).</title>
        <authorList>
            <person name="Barber D."/>
            <person name="Sanchez-Monge R."/>
            <person name="Mendez E."/>
            <person name="Lazaro A."/>
            <person name="Garcia-Olmedo F."/>
            <person name="Salcedo G."/>
        </authorList>
    </citation>
    <scope>PROTEIN SEQUENCE OF 25-53</scope>
</reference>
<reference key="3">
    <citation type="journal article" date="1993" name="Electrophoresis">
        <title>Separation of acidic barley endosperm proteins by two-dimensional electrophoresis.</title>
        <authorList>
            <person name="Flengsrud R."/>
        </authorList>
    </citation>
    <scope>PROTEIN SEQUENCE OF 25-33</scope>
    <source>
        <strain>cv. H354-295-2-5</strain>
        <tissue>Starchy endosperm</tissue>
    </source>
</reference>
<name>IAAB_HORVU</name>
<comment type="function">
    <text>Part of a complex with inhibitory activity, but CMb is inactive as a separate subunit.</text>
</comment>
<comment type="subunit">
    <text>Heterotetramer of one CMa, one CMb and two CMd chains.</text>
</comment>
<comment type="subcellular location">
    <subcellularLocation>
        <location>Secreted</location>
    </subcellularLocation>
</comment>
<comment type="tissue specificity">
    <text>Endosperm.</text>
</comment>
<comment type="PTM">
    <text evidence="4">Five disulfide bonds, which are essential for the inhibitor activity, are probably present.</text>
</comment>
<comment type="PTM">
    <text>Exists both in a glycosylated and in an unglycosylated form. The glycosylated form is a potent allergen.</text>
</comment>
<comment type="allergen">
    <text>Causes an allergic reaction in human. Involved in baker's asthma.</text>
</comment>
<comment type="similarity">
    <text evidence="4">Belongs to the protease inhibitor I6 (cereal trypsin/alpha-amylase inhibitor) family.</text>
</comment>
<dbReference type="EMBL" id="X69938">
    <property type="protein sequence ID" value="CAA49556.1"/>
    <property type="molecule type" value="mRNA"/>
</dbReference>
<dbReference type="PIR" id="S78524">
    <property type="entry name" value="S78524"/>
</dbReference>
<dbReference type="SMR" id="P32936"/>
<dbReference type="Allergome" id="418">
    <property type="allergen name" value="Hor v 15"/>
</dbReference>
<dbReference type="MEROPS" id="I06.004"/>
<dbReference type="GlyCosmos" id="P32936">
    <property type="glycosylation" value="1 site, No reported glycans"/>
</dbReference>
<dbReference type="ExpressionAtlas" id="P32936">
    <property type="expression patterns" value="baseline and differential"/>
</dbReference>
<dbReference type="GO" id="GO:0005576">
    <property type="term" value="C:extracellular region"/>
    <property type="evidence" value="ECO:0007669"/>
    <property type="project" value="UniProtKB-SubCell"/>
</dbReference>
<dbReference type="GO" id="GO:0015066">
    <property type="term" value="F:alpha-amylase inhibitor activity"/>
    <property type="evidence" value="ECO:0007669"/>
    <property type="project" value="UniProtKB-KW"/>
</dbReference>
<dbReference type="GO" id="GO:0004867">
    <property type="term" value="F:serine-type endopeptidase inhibitor activity"/>
    <property type="evidence" value="ECO:0007669"/>
    <property type="project" value="UniProtKB-KW"/>
</dbReference>
<dbReference type="CDD" id="cd00261">
    <property type="entry name" value="AAI_SS"/>
    <property type="match status" value="1"/>
</dbReference>
<dbReference type="Gene3D" id="1.10.110.10">
    <property type="entry name" value="Plant lipid-transfer and hydrophobic proteins"/>
    <property type="match status" value="1"/>
</dbReference>
<dbReference type="InterPro" id="IPR006106">
    <property type="entry name" value="Allergen/soft/tryp_amyl_inhib"/>
</dbReference>
<dbReference type="InterPro" id="IPR006105">
    <property type="entry name" value="Allergen/tryp_amyl_inhib_CS"/>
</dbReference>
<dbReference type="InterPro" id="IPR036312">
    <property type="entry name" value="Bifun_inhib/LTP/seed_sf"/>
</dbReference>
<dbReference type="InterPro" id="IPR016140">
    <property type="entry name" value="Bifunc_inhib/LTP/seed_store"/>
</dbReference>
<dbReference type="PANTHER" id="PTHR34481:SF7">
    <property type="entry name" value="ALPHA-AMYLASE_TRYPSIN INHIBITOR CM16"/>
    <property type="match status" value="1"/>
</dbReference>
<dbReference type="PANTHER" id="PTHR34481">
    <property type="entry name" value="TRYPSIN/FACTOR XIIA INHIBITOR-RELATED"/>
    <property type="match status" value="1"/>
</dbReference>
<dbReference type="Pfam" id="PF00234">
    <property type="entry name" value="Tryp_alpha_amyl"/>
    <property type="match status" value="1"/>
</dbReference>
<dbReference type="PRINTS" id="PR00808">
    <property type="entry name" value="AMLASEINHBTR"/>
</dbReference>
<dbReference type="SMART" id="SM00499">
    <property type="entry name" value="AAI"/>
    <property type="match status" value="1"/>
</dbReference>
<dbReference type="SUPFAM" id="SSF47699">
    <property type="entry name" value="Bifunctional inhibitor/lipid-transfer protein/seed storage 2S albumin"/>
    <property type="match status" value="1"/>
</dbReference>
<dbReference type="PROSITE" id="PS00426">
    <property type="entry name" value="CEREAL_TRYP_AMYL_INH"/>
    <property type="match status" value="1"/>
</dbReference>
<feature type="signal peptide" evidence="2 3">
    <location>
        <begin position="1"/>
        <end position="24"/>
    </location>
</feature>
<feature type="chain" id="PRO_0000014351" description="Alpha-amylase/trypsin inhibitor CMb">
    <location>
        <begin position="25"/>
        <end position="149"/>
    </location>
</feature>
<feature type="glycosylation site" description="N-linked (GlcNAc...) asparagine" evidence="1">
    <location>
        <position position="124"/>
    </location>
</feature>
<feature type="sequence conflict" description="In Ref. 3; AA sequence." evidence="4" ref="3">
    <original>C</original>
    <variation>D</variation>
    <location>
        <position position="30"/>
    </location>
</feature>
<feature type="sequence conflict" description="In Ref. 3; AA sequence." evidence="4" ref="3">
    <original>W</original>
    <variation>P</variation>
    <location>
        <position position="33"/>
    </location>
</feature>
<evidence type="ECO:0000255" key="1"/>
<evidence type="ECO:0000269" key="2">
    <source>
    </source>
</evidence>
<evidence type="ECO:0000269" key="3">
    <source>
    </source>
</evidence>
<evidence type="ECO:0000305" key="4"/>
<organism>
    <name type="scientific">Hordeum vulgare</name>
    <name type="common">Barley</name>
    <dbReference type="NCBI Taxonomy" id="4513"/>
    <lineage>
        <taxon>Eukaryota</taxon>
        <taxon>Viridiplantae</taxon>
        <taxon>Streptophyta</taxon>
        <taxon>Embryophyta</taxon>
        <taxon>Tracheophyta</taxon>
        <taxon>Spermatophyta</taxon>
        <taxon>Magnoliopsida</taxon>
        <taxon>Liliopsida</taxon>
        <taxon>Poales</taxon>
        <taxon>Poaceae</taxon>
        <taxon>BOP clade</taxon>
        <taxon>Pooideae</taxon>
        <taxon>Triticodae</taxon>
        <taxon>Triticeae</taxon>
        <taxon>Hordeinae</taxon>
        <taxon>Hordeum</taxon>
    </lineage>
</organism>
<gene>
    <name type="primary">IAT2</name>
</gene>
<proteinExistence type="evidence at protein level"/>
<accession>P32936</accession>
<sequence length="149" mass="16526">MASKSSCDLLLAAVLVSIFAAVAAVGSEDCTPWTATPITPLPSCRDYVEQQACRIETPGPPYLAKQQCCGELANIPQQCRCQALRFFMGRKSRPDQSGLMELPGCPREVQMDFVRILVTPGFCNLTTVHNTPYCLAMDEWQWNRQFCSS</sequence>